<organism evidence="7">
    <name type="scientific">Gallus gallus</name>
    <name type="common">Chicken</name>
    <dbReference type="NCBI Taxonomy" id="9031"/>
    <lineage>
        <taxon>Eukaryota</taxon>
        <taxon>Metazoa</taxon>
        <taxon>Chordata</taxon>
        <taxon>Craniata</taxon>
        <taxon>Vertebrata</taxon>
        <taxon>Euteleostomi</taxon>
        <taxon>Archelosauria</taxon>
        <taxon>Archosauria</taxon>
        <taxon>Dinosauria</taxon>
        <taxon>Saurischia</taxon>
        <taxon>Theropoda</taxon>
        <taxon>Coelurosauria</taxon>
        <taxon>Aves</taxon>
        <taxon>Neognathae</taxon>
        <taxon>Galloanserae</taxon>
        <taxon>Galliformes</taxon>
        <taxon>Phasianidae</taxon>
        <taxon>Phasianinae</taxon>
        <taxon>Gallus</taxon>
    </lineage>
</organism>
<gene>
    <name evidence="4" type="primary">PGGHG</name>
    <name evidence="4" type="synonym">ATHL1</name>
</gene>
<reference evidence="6" key="1">
    <citation type="journal article" date="2016" name="Biochem. Biophys. Res. Commun.">
        <title>Catalytic site of human protein-glucosylgalactosylhydroxylysine glucosidase: Three crucial carboxyl residues were determined by cloning and site-directed mutagenesis.</title>
        <authorList>
            <person name="Hamazaki H."/>
            <person name="Hamazaki M.H."/>
        </authorList>
    </citation>
    <scope>NUCLEOTIDE SEQUENCE [MRNA] (ISOFORMS 1 AND 2)</scope>
    <scope>FUNCTION</scope>
    <scope>CATALYTIC ACTIVITY</scope>
    <scope>IDENTIFICATION BY MASS SPECTROMETRY</scope>
    <source>
        <tissue evidence="6">Embryo</tissue>
    </source>
</reference>
<reference evidence="7" key="2">
    <citation type="journal article" date="2004" name="Nature">
        <title>Sequence and comparative analysis of the chicken genome provide unique perspectives on vertebrate evolution.</title>
        <authorList>
            <person name="Hillier L.W."/>
            <person name="Miller W."/>
            <person name="Birney E."/>
            <person name="Warren W."/>
            <person name="Hardison R.C."/>
            <person name="Ponting C.P."/>
            <person name="Bork P."/>
            <person name="Burt D.W."/>
            <person name="Groenen M.A.M."/>
            <person name="Delany M.E."/>
            <person name="Dodgson J.B."/>
            <person name="Chinwalla A.T."/>
            <person name="Cliften P.F."/>
            <person name="Clifton S.W."/>
            <person name="Delehaunty K.D."/>
            <person name="Fronick C."/>
            <person name="Fulton R.S."/>
            <person name="Graves T.A."/>
            <person name="Kremitzki C."/>
            <person name="Layman D."/>
            <person name="Magrini V."/>
            <person name="McPherson J.D."/>
            <person name="Miner T.L."/>
            <person name="Minx P."/>
            <person name="Nash W.E."/>
            <person name="Nhan M.N."/>
            <person name="Nelson J.O."/>
            <person name="Oddy L.G."/>
            <person name="Pohl C.S."/>
            <person name="Randall-Maher J."/>
            <person name="Smith S.M."/>
            <person name="Wallis J.W."/>
            <person name="Yang S.-P."/>
            <person name="Romanov M.N."/>
            <person name="Rondelli C.M."/>
            <person name="Paton B."/>
            <person name="Smith J."/>
            <person name="Morrice D."/>
            <person name="Daniels L."/>
            <person name="Tempest H.G."/>
            <person name="Robertson L."/>
            <person name="Masabanda J.S."/>
            <person name="Griffin D.K."/>
            <person name="Vignal A."/>
            <person name="Fillon V."/>
            <person name="Jacobbson L."/>
            <person name="Kerje S."/>
            <person name="Andersson L."/>
            <person name="Crooijmans R.P."/>
            <person name="Aerts J."/>
            <person name="van der Poel J.J."/>
            <person name="Ellegren H."/>
            <person name="Caldwell R.B."/>
            <person name="Hubbard S.J."/>
            <person name="Grafham D.V."/>
            <person name="Kierzek A.M."/>
            <person name="McLaren S.R."/>
            <person name="Overton I.M."/>
            <person name="Arakawa H."/>
            <person name="Beattie K.J."/>
            <person name="Bezzubov Y."/>
            <person name="Boardman P.E."/>
            <person name="Bonfield J.K."/>
            <person name="Croning M.D.R."/>
            <person name="Davies R.M."/>
            <person name="Francis M.D."/>
            <person name="Humphray S.J."/>
            <person name="Scott C.E."/>
            <person name="Taylor R.G."/>
            <person name="Tickle C."/>
            <person name="Brown W.R.A."/>
            <person name="Rogers J."/>
            <person name="Buerstedde J.-M."/>
            <person name="Wilson S.A."/>
            <person name="Stubbs L."/>
            <person name="Ovcharenko I."/>
            <person name="Gordon L."/>
            <person name="Lucas S."/>
            <person name="Miller M.M."/>
            <person name="Inoko H."/>
            <person name="Shiina T."/>
            <person name="Kaufman J."/>
            <person name="Salomonsen J."/>
            <person name="Skjoedt K."/>
            <person name="Wong G.K.-S."/>
            <person name="Wang J."/>
            <person name="Liu B."/>
            <person name="Wang J."/>
            <person name="Yu J."/>
            <person name="Yang H."/>
            <person name="Nefedov M."/>
            <person name="Koriabine M."/>
            <person name="Dejong P.J."/>
            <person name="Goodstadt L."/>
            <person name="Webber C."/>
            <person name="Dickens N.J."/>
            <person name="Letunic I."/>
            <person name="Suyama M."/>
            <person name="Torrents D."/>
            <person name="von Mering C."/>
            <person name="Zdobnov E.M."/>
            <person name="Makova K."/>
            <person name="Nekrutenko A."/>
            <person name="Elnitski L."/>
            <person name="Eswara P."/>
            <person name="King D.C."/>
            <person name="Yang S.-P."/>
            <person name="Tyekucheva S."/>
            <person name="Radakrishnan A."/>
            <person name="Harris R.S."/>
            <person name="Chiaromonte F."/>
            <person name="Taylor J."/>
            <person name="He J."/>
            <person name="Rijnkels M."/>
            <person name="Griffiths-Jones S."/>
            <person name="Ureta-Vidal A."/>
            <person name="Hoffman M.M."/>
            <person name="Severin J."/>
            <person name="Searle S.M.J."/>
            <person name="Law A.S."/>
            <person name="Speed D."/>
            <person name="Waddington D."/>
            <person name="Cheng Z."/>
            <person name="Tuzun E."/>
            <person name="Eichler E."/>
            <person name="Bao Z."/>
            <person name="Flicek P."/>
            <person name="Shteynberg D.D."/>
            <person name="Brent M.R."/>
            <person name="Bye J.M."/>
            <person name="Huckle E.J."/>
            <person name="Chatterji S."/>
            <person name="Dewey C."/>
            <person name="Pachter L."/>
            <person name="Kouranov A."/>
            <person name="Mourelatos Z."/>
            <person name="Hatzigeorgiou A.G."/>
            <person name="Paterson A.H."/>
            <person name="Ivarie R."/>
            <person name="Brandstrom M."/>
            <person name="Axelsson E."/>
            <person name="Backstrom N."/>
            <person name="Berlin S."/>
            <person name="Webster M.T."/>
            <person name="Pourquie O."/>
            <person name="Reymond A."/>
            <person name="Ucla C."/>
            <person name="Antonarakis S.E."/>
            <person name="Long M."/>
            <person name="Emerson J.J."/>
            <person name="Betran E."/>
            <person name="Dupanloup I."/>
            <person name="Kaessmann H."/>
            <person name="Hinrichs A.S."/>
            <person name="Bejerano G."/>
            <person name="Furey T.S."/>
            <person name="Harte R.A."/>
            <person name="Raney B."/>
            <person name="Siepel A."/>
            <person name="Kent W.J."/>
            <person name="Haussler D."/>
            <person name="Eyras E."/>
            <person name="Castelo R."/>
            <person name="Abril J.F."/>
            <person name="Castellano S."/>
            <person name="Camara F."/>
            <person name="Parra G."/>
            <person name="Guigo R."/>
            <person name="Bourque G."/>
            <person name="Tesler G."/>
            <person name="Pevzner P.A."/>
            <person name="Smit A."/>
            <person name="Fulton L.A."/>
            <person name="Mardis E.R."/>
            <person name="Wilson R.K."/>
        </authorList>
    </citation>
    <scope>NUCLEOTIDE SEQUENCE [LARGE SCALE GENOMIC DNA]</scope>
    <source>
        <strain evidence="7">Red jungle fowl</strain>
    </source>
</reference>
<proteinExistence type="evidence at protein level"/>
<dbReference type="EC" id="3.2.1.107" evidence="3"/>
<dbReference type="EMBL" id="LC011569">
    <property type="protein sequence ID" value="BAR88294.1"/>
    <property type="molecule type" value="mRNA"/>
</dbReference>
<dbReference type="EMBL" id="LC011570">
    <property type="protein sequence ID" value="BAR88295.1"/>
    <property type="molecule type" value="mRNA"/>
</dbReference>
<dbReference type="EMBL" id="AADN04000190">
    <property type="status" value="NOT_ANNOTATED_CDS"/>
    <property type="molecule type" value="Genomic_DNA"/>
</dbReference>
<dbReference type="RefSeq" id="NP_001305330.1">
    <property type="nucleotide sequence ID" value="NM_001318401.1"/>
</dbReference>
<dbReference type="RefSeq" id="XP_015141747.1">
    <property type="nucleotide sequence ID" value="XM_015286261.1"/>
</dbReference>
<dbReference type="SMR" id="F1NZI4"/>
<dbReference type="FunCoup" id="F1NZI4">
    <property type="interactions" value="2"/>
</dbReference>
<dbReference type="STRING" id="9031.ENSGALP00000050240"/>
<dbReference type="GlyGen" id="F1NZI4">
    <property type="glycosylation" value="1 site"/>
</dbReference>
<dbReference type="PaxDb" id="9031-ENSGALP00000006728"/>
<dbReference type="GeneID" id="422991"/>
<dbReference type="KEGG" id="gga:422991"/>
<dbReference type="CTD" id="80162"/>
<dbReference type="VEuPathDB" id="HostDB:geneid_422991"/>
<dbReference type="eggNOG" id="KOG4125">
    <property type="taxonomic scope" value="Eukaryota"/>
</dbReference>
<dbReference type="HOGENOM" id="CLU_006285_4_2_1"/>
<dbReference type="InParanoid" id="F1NZI4"/>
<dbReference type="OrthoDB" id="200349at2759"/>
<dbReference type="TreeFam" id="TF300109"/>
<dbReference type="BRENDA" id="3.2.1.107">
    <property type="organism ID" value="1306"/>
</dbReference>
<dbReference type="PRO" id="PR:F1NZI4"/>
<dbReference type="Proteomes" id="UP000000539">
    <property type="component" value="Chromosome 5"/>
</dbReference>
<dbReference type="Bgee" id="ENSGALG00000004234">
    <property type="expression patterns" value="Expressed in liver and 8 other cell types or tissues"/>
</dbReference>
<dbReference type="GO" id="GO:0005829">
    <property type="term" value="C:cytosol"/>
    <property type="evidence" value="ECO:0000318"/>
    <property type="project" value="GO_Central"/>
</dbReference>
<dbReference type="GO" id="GO:0047402">
    <property type="term" value="F:protein-glucosylgalactosylhydroxylysine glucosidase activity"/>
    <property type="evidence" value="ECO:0000314"/>
    <property type="project" value="UniProtKB"/>
</dbReference>
<dbReference type="GO" id="GO:0005975">
    <property type="term" value="P:carbohydrate metabolic process"/>
    <property type="evidence" value="ECO:0000314"/>
    <property type="project" value="UniProtKB"/>
</dbReference>
<dbReference type="FunFam" id="1.50.10.10:FF:000023">
    <property type="entry name" value="Protein-glucosylgalactosylhydroxylysine glucosidase"/>
    <property type="match status" value="1"/>
</dbReference>
<dbReference type="FunFam" id="2.60.420.10:FF:000003">
    <property type="entry name" value="Protein-glucosylgalactosylhydroxylysine glucosidase"/>
    <property type="match status" value="1"/>
</dbReference>
<dbReference type="Gene3D" id="1.50.10.10">
    <property type="match status" value="1"/>
</dbReference>
<dbReference type="Gene3D" id="2.60.420.10">
    <property type="entry name" value="Maltose phosphorylase, domain 3"/>
    <property type="match status" value="1"/>
</dbReference>
<dbReference type="InterPro" id="IPR008928">
    <property type="entry name" value="6-hairpin_glycosidase_sf"/>
</dbReference>
<dbReference type="InterPro" id="IPR012341">
    <property type="entry name" value="6hp_glycosidase-like_sf"/>
</dbReference>
<dbReference type="InterPro" id="IPR005195">
    <property type="entry name" value="Glyco_hydro_65_M"/>
</dbReference>
<dbReference type="PANTHER" id="PTHR11051">
    <property type="entry name" value="GLYCOSYL HYDROLASE-RELATED"/>
    <property type="match status" value="1"/>
</dbReference>
<dbReference type="PANTHER" id="PTHR11051:SF8">
    <property type="entry name" value="PROTEIN-GLUCOSYLGALACTOSYLHYDROXYLYSINE GLUCOSIDASE"/>
    <property type="match status" value="1"/>
</dbReference>
<dbReference type="Pfam" id="PF03632">
    <property type="entry name" value="Glyco_hydro_65m"/>
    <property type="match status" value="1"/>
</dbReference>
<dbReference type="SUPFAM" id="SSF48208">
    <property type="entry name" value="Six-hairpin glycosidases"/>
    <property type="match status" value="1"/>
</dbReference>
<keyword id="KW-0025">Alternative splicing</keyword>
<keyword id="KW-0326">Glycosidase</keyword>
<keyword id="KW-0378">Hydrolase</keyword>
<keyword id="KW-1185">Reference proteome</keyword>
<name>PGGHG_CHICK</name>
<feature type="chain" id="PRO_0000439598" description="Protein-glucosylgalactosylhydroxylysine glucosidase">
    <location>
        <begin position="1"/>
        <end position="702"/>
    </location>
</feature>
<feature type="active site" description="Proton donor" evidence="2">
    <location>
        <position position="440"/>
    </location>
</feature>
<feature type="binding site" evidence="1">
    <location>
        <begin position="310"/>
        <end position="311"/>
    </location>
    <ligand>
        <name>substrate</name>
    </ligand>
</feature>
<feature type="binding site" evidence="1">
    <location>
        <begin position="508"/>
        <end position="509"/>
    </location>
    <ligand>
        <name>substrate</name>
    </ligand>
</feature>
<feature type="splice variant" id="VSP_058888" description="In isoform 2.">
    <original>MSMRGSGK</original>
    <variation>MLGGRWPCDGMRWEKL</variation>
    <location>
        <begin position="1"/>
        <end position="8"/>
    </location>
</feature>
<feature type="sequence conflict" description="In Ref. 1; BAR88294/BAR88295." evidence="5" ref="1">
    <original>W</original>
    <variation>R</variation>
    <location>
        <position position="131"/>
    </location>
</feature>
<feature type="sequence conflict" description="In Ref. 1; BAR88294/BAR88295." evidence="5" ref="1">
    <original>K</original>
    <variation>E</variation>
    <location>
        <position position="352"/>
    </location>
</feature>
<feature type="sequence conflict" description="In Ref. 1; BAR88294/BAR88295." evidence="5" ref="1">
    <original>Q</original>
    <variation>R</variation>
    <location>
        <position position="428"/>
    </location>
</feature>
<sequence length="702" mass="78358">MSMRGSGKLWLVMADGQEDPAVFTSTCLPSDSRLLATVTNAYLGTRVYRNILHVSGVYNGAAGDTHRADIPSPVNVRMTVPDGDVPVETFTLNTRTGTFSHKLESSSYTATHQIYAHHSLVHLMAFSITIWRSAGTSQPITVQLQAPFVPKSQDLDLQQGPDFQGAHYIYGQTLVPEVEGGPQPTVHMLWTPVPQAVTLHEEEQERRWEFLTAVAESEEEAKRSYSEGLARMAAGSLHSSHTRAWAALWRGCCVDLEGPLPLRQALYGCLYYLLSAIPPQGTPGFHFHGISPGGLSNGTRGEDYWGHVFWDQDTWIFPNILLFYPEAARAILEYRIRTLEGALLNAQEQGYKGAKFPWESAATGREVCPEDIYGAQEIHITGDVLMAFEQYYHTTQDQKLFRTDGGWELVSAVAQYWCSRMVWSEEEQCYHIRGVMPPDEYHYQVDNSAYTNAVAQRSLNFAASVARDFFIPVPEEWVECAKKVKVPFDAVRKYHPEYDGYSPGEPVKQADVVLLGFPLMHPMHPEVRRNDLVMYEPVTELSGPAMTWSMFAVGWLELKETQRAQGLLNKCFSNITEPFKIWVENSDGSGAVNFLTGMGGFLQAVLFGYTGFRITKTNLRFDPAFPSDVSKLEVTGVSYLGSKLKFSITKEKMRIAVTKCPLHPPLEAVLEESGQRFPLHEGQSISFPTAAGCIQKAPSEGL</sequence>
<comment type="function">
    <text evidence="3">Catalyzes the hydrolysis of glucose from the disaccharide unit linked to hydroxylysine residues of collagen and collagen-like proteins.</text>
</comment>
<comment type="catalytic activity">
    <reaction evidence="3">
        <text>(5R)-5-O-[alpha-D-glucosyl-(1-&gt;2)-beta-D-galactosyl]-5-hydroxy-L-lysyl-[collagen] + H2O = (5R)-5-O-(beta-D-galactosyl)-5-hydroxy-L-lysyl-[collagen] + D-glucose</text>
        <dbReference type="Rhea" id="RHEA:11068"/>
        <dbReference type="Rhea" id="RHEA-COMP:12753"/>
        <dbReference type="Rhea" id="RHEA-COMP:12754"/>
        <dbReference type="ChEBI" id="CHEBI:4167"/>
        <dbReference type="ChEBI" id="CHEBI:15377"/>
        <dbReference type="ChEBI" id="CHEBI:133443"/>
        <dbReference type="ChEBI" id="CHEBI:133452"/>
        <dbReference type="EC" id="3.2.1.107"/>
    </reaction>
</comment>
<comment type="alternative products">
    <event type="alternative splicing"/>
    <isoform>
        <id>F1NZI4-1</id>
        <name>1</name>
        <sequence type="displayed"/>
    </isoform>
    <isoform>
        <id>F1NZI4-2</id>
        <name>2</name>
        <sequence type="described" ref="VSP_058888"/>
    </isoform>
</comment>
<comment type="similarity">
    <text evidence="5">Belongs to the glycosyl hydrolase 65 family.</text>
</comment>
<evidence type="ECO:0000250" key="1">
    <source>
        <dbReference type="UniProtKB" id="D6XZ22"/>
    </source>
</evidence>
<evidence type="ECO:0000250" key="2">
    <source>
        <dbReference type="UniProtKB" id="Q32M88"/>
    </source>
</evidence>
<evidence type="ECO:0000269" key="3">
    <source>
    </source>
</evidence>
<evidence type="ECO:0000303" key="4">
    <source>
    </source>
</evidence>
<evidence type="ECO:0000305" key="5"/>
<evidence type="ECO:0000312" key="6">
    <source>
        <dbReference type="EMBL" id="BAR88294.1"/>
    </source>
</evidence>
<evidence type="ECO:0000312" key="7">
    <source>
        <dbReference type="Proteomes" id="UP000000539"/>
    </source>
</evidence>
<accession>F1NZI4</accession>
<accession>A0A0H5AGM0</accession>
<accession>A0A0H5B0F3</accession>
<accession>A0A1D5PBV8</accession>
<protein>
    <recommendedName>
        <fullName evidence="4">Protein-glucosylgalactosylhydroxylysine glucosidase</fullName>
        <ecNumber evidence="3">3.2.1.107</ecNumber>
    </recommendedName>
    <alternativeName>
        <fullName evidence="5">Acid trehalase-like protein 1</fullName>
    </alternativeName>
</protein>